<gene>
    <name evidence="1" type="primary">dcyD</name>
    <name type="ordered locus">SbBS512_E1047</name>
</gene>
<evidence type="ECO:0000255" key="1">
    <source>
        <dbReference type="HAMAP-Rule" id="MF_01045"/>
    </source>
</evidence>
<reference key="1">
    <citation type="submission" date="2008-05" db="EMBL/GenBank/DDBJ databases">
        <title>Complete sequence of Shigella boydii serotype 18 strain BS512.</title>
        <authorList>
            <person name="Rasko D.A."/>
            <person name="Rosovitz M."/>
            <person name="Maurelli A.T."/>
            <person name="Myers G."/>
            <person name="Seshadri R."/>
            <person name="Cer R."/>
            <person name="Jiang L."/>
            <person name="Ravel J."/>
            <person name="Sebastian Y."/>
        </authorList>
    </citation>
    <scope>NUCLEOTIDE SEQUENCE [LARGE SCALE GENOMIC DNA]</scope>
    <source>
        <strain>CDC 3083-94 / BS512</strain>
    </source>
</reference>
<sequence length="328" mass="35152">MPLHNLTRFPRLEFIGAPTPLEYLPRFSDYLGREIFIKRDDVTPMAMGGNKLRKLEFLAADALREGADTLITAGAIQSNHVRQTAAVAAKLGLHCVALLENPIGTTAENYLTNGNRLLLNLFNTQIEMCDALTDPNAQLEELATRVEAQGFRPYVIPVGGSNALGALGYVESALEIAQQCEGAVNISSVVVASGSAGTHAGLAVGLEHLMPESELIGVTVSRSVADQLPKVVNLQQAIAKELELTASAEILLWDDYFAPGYGVPNDEGMEAVKLLARLEGILLDPVYTGKAMAGLIDGISQKRFKDEGPILFIHTGGAPALFAYHPHV</sequence>
<dbReference type="EC" id="4.4.1.15" evidence="1"/>
<dbReference type="EMBL" id="CP001063">
    <property type="protein sequence ID" value="ACD09299.1"/>
    <property type="molecule type" value="Genomic_DNA"/>
</dbReference>
<dbReference type="RefSeq" id="WP_001128240.1">
    <property type="nucleotide sequence ID" value="NC_010658.1"/>
</dbReference>
<dbReference type="SMR" id="B2TXG4"/>
<dbReference type="STRING" id="344609.SbBS512_E1047"/>
<dbReference type="KEGG" id="sbc:SbBS512_E1047"/>
<dbReference type="HOGENOM" id="CLU_048897_1_0_6"/>
<dbReference type="Proteomes" id="UP000001030">
    <property type="component" value="Chromosome"/>
</dbReference>
<dbReference type="GO" id="GO:0019148">
    <property type="term" value="F:D-cysteine desulfhydrase activity"/>
    <property type="evidence" value="ECO:0007669"/>
    <property type="project" value="UniProtKB-UniRule"/>
</dbReference>
<dbReference type="GO" id="GO:0046416">
    <property type="term" value="P:D-amino acid metabolic process"/>
    <property type="evidence" value="ECO:0007669"/>
    <property type="project" value="UniProtKB-UniRule"/>
</dbReference>
<dbReference type="CDD" id="cd06449">
    <property type="entry name" value="ACCD"/>
    <property type="match status" value="1"/>
</dbReference>
<dbReference type="FunFam" id="3.40.50.1100:FF:000019">
    <property type="entry name" value="D-cysteine desulfhydrase"/>
    <property type="match status" value="1"/>
</dbReference>
<dbReference type="Gene3D" id="3.40.50.1100">
    <property type="match status" value="2"/>
</dbReference>
<dbReference type="HAMAP" id="MF_01045">
    <property type="entry name" value="D_Cys_desulfhydr"/>
    <property type="match status" value="1"/>
</dbReference>
<dbReference type="InterPro" id="IPR027278">
    <property type="entry name" value="ACCD_DCysDesulf"/>
</dbReference>
<dbReference type="InterPro" id="IPR005966">
    <property type="entry name" value="D-Cys_desShydrase"/>
</dbReference>
<dbReference type="InterPro" id="IPR023702">
    <property type="entry name" value="D_Cys_desulphydr_bac"/>
</dbReference>
<dbReference type="InterPro" id="IPR001926">
    <property type="entry name" value="TrpB-like_PALP"/>
</dbReference>
<dbReference type="InterPro" id="IPR036052">
    <property type="entry name" value="TrpB-like_PALP_sf"/>
</dbReference>
<dbReference type="NCBIfam" id="TIGR01275">
    <property type="entry name" value="ACC_deam_rel"/>
    <property type="match status" value="1"/>
</dbReference>
<dbReference type="NCBIfam" id="NF003029">
    <property type="entry name" value="PRK03910.1-1"/>
    <property type="match status" value="1"/>
</dbReference>
<dbReference type="NCBIfam" id="NF003030">
    <property type="entry name" value="PRK03910.1-3"/>
    <property type="match status" value="1"/>
</dbReference>
<dbReference type="NCBIfam" id="NF003032">
    <property type="entry name" value="PRK03910.1-5"/>
    <property type="match status" value="1"/>
</dbReference>
<dbReference type="PANTHER" id="PTHR43780">
    <property type="entry name" value="1-AMINOCYCLOPROPANE-1-CARBOXYLATE DEAMINASE-RELATED"/>
    <property type="match status" value="1"/>
</dbReference>
<dbReference type="PANTHER" id="PTHR43780:SF2">
    <property type="entry name" value="1-AMINOCYCLOPROPANE-1-CARBOXYLATE DEAMINASE-RELATED"/>
    <property type="match status" value="1"/>
</dbReference>
<dbReference type="Pfam" id="PF00291">
    <property type="entry name" value="PALP"/>
    <property type="match status" value="1"/>
</dbReference>
<dbReference type="PIRSF" id="PIRSF006278">
    <property type="entry name" value="ACCD_DCysDesulf"/>
    <property type="match status" value="1"/>
</dbReference>
<dbReference type="SUPFAM" id="SSF53686">
    <property type="entry name" value="Tryptophan synthase beta subunit-like PLP-dependent enzymes"/>
    <property type="match status" value="1"/>
</dbReference>
<proteinExistence type="inferred from homology"/>
<protein>
    <recommendedName>
        <fullName evidence="1">D-cysteine desulfhydrase</fullName>
        <ecNumber evidence="1">4.4.1.15</ecNumber>
    </recommendedName>
</protein>
<name>DCYD_SHIB3</name>
<organism>
    <name type="scientific">Shigella boydii serotype 18 (strain CDC 3083-94 / BS512)</name>
    <dbReference type="NCBI Taxonomy" id="344609"/>
    <lineage>
        <taxon>Bacteria</taxon>
        <taxon>Pseudomonadati</taxon>
        <taxon>Pseudomonadota</taxon>
        <taxon>Gammaproteobacteria</taxon>
        <taxon>Enterobacterales</taxon>
        <taxon>Enterobacteriaceae</taxon>
        <taxon>Shigella</taxon>
    </lineage>
</organism>
<accession>B2TXG4</accession>
<keyword id="KW-0456">Lyase</keyword>
<keyword id="KW-0663">Pyridoxal phosphate</keyword>
<keyword id="KW-1185">Reference proteome</keyword>
<feature type="chain" id="PRO_1000136173" description="D-cysteine desulfhydrase">
    <location>
        <begin position="1"/>
        <end position="328"/>
    </location>
</feature>
<feature type="modified residue" description="N6-(pyridoxal phosphate)lysine" evidence="1">
    <location>
        <position position="51"/>
    </location>
</feature>
<comment type="function">
    <text evidence="1">Catalyzes the alpha,beta-elimination reaction of D-cysteine and of several D-cysteine derivatives. It could be a defense mechanism against D-cysteine.</text>
</comment>
<comment type="catalytic activity">
    <reaction evidence="1">
        <text>D-cysteine + H2O = hydrogen sulfide + pyruvate + NH4(+) + H(+)</text>
        <dbReference type="Rhea" id="RHEA:11268"/>
        <dbReference type="ChEBI" id="CHEBI:15361"/>
        <dbReference type="ChEBI" id="CHEBI:15377"/>
        <dbReference type="ChEBI" id="CHEBI:15378"/>
        <dbReference type="ChEBI" id="CHEBI:28938"/>
        <dbReference type="ChEBI" id="CHEBI:29919"/>
        <dbReference type="ChEBI" id="CHEBI:35236"/>
        <dbReference type="EC" id="4.4.1.15"/>
    </reaction>
</comment>
<comment type="cofactor">
    <cofactor evidence="1">
        <name>pyridoxal 5'-phosphate</name>
        <dbReference type="ChEBI" id="CHEBI:597326"/>
    </cofactor>
</comment>
<comment type="subunit">
    <text evidence="1">Homodimer.</text>
</comment>
<comment type="similarity">
    <text evidence="1">Belongs to the ACC deaminase/D-cysteine desulfhydrase family.</text>
</comment>